<feature type="chain" id="PRO_1000203268" description="Elongation factor P">
    <location>
        <begin position="1"/>
        <end position="185"/>
    </location>
</feature>
<proteinExistence type="inferred from homology"/>
<name>EFP_AGARV</name>
<organism>
    <name type="scientific">Agathobacter rectalis (strain ATCC 33656 / DSM 3377 / JCM 17463 / KCTC 5835 / VPI 0990)</name>
    <name type="common">Eubacterium rectale</name>
    <dbReference type="NCBI Taxonomy" id="515619"/>
    <lineage>
        <taxon>Bacteria</taxon>
        <taxon>Bacillati</taxon>
        <taxon>Bacillota</taxon>
        <taxon>Clostridia</taxon>
        <taxon>Lachnospirales</taxon>
        <taxon>Lachnospiraceae</taxon>
        <taxon>Agathobacter</taxon>
    </lineage>
</organism>
<protein>
    <recommendedName>
        <fullName evidence="1">Elongation factor P</fullName>
        <shortName evidence="1">EF-P</shortName>
    </recommendedName>
</protein>
<sequence length="185" mass="20700">MISAGDFRNGVTIEFEGNIYQIIEFQHVKPGKGAAFVRTKLKNIISGGVVEKTFRPTEKCPTAHIDRKDMQYLYADDDFYHFMDVETYDQIDLPKDEVGDALKFVKENEMCKVCSHKGNVFAVEPPLFVELTVTETEPGFKGDTATGATKPATVETGATVYVPLFVETDDVIKIDTRTGEYLSRV</sequence>
<comment type="function">
    <text evidence="1">Involved in peptide bond synthesis. Stimulates efficient translation and peptide-bond synthesis on native or reconstituted 70S ribosomes in vitro. Probably functions indirectly by altering the affinity of the ribosome for aminoacyl-tRNA, thus increasing their reactivity as acceptors for peptidyl transferase.</text>
</comment>
<comment type="pathway">
    <text evidence="1">Protein biosynthesis; polypeptide chain elongation.</text>
</comment>
<comment type="subcellular location">
    <subcellularLocation>
        <location evidence="1">Cytoplasm</location>
    </subcellularLocation>
</comment>
<comment type="similarity">
    <text evidence="1">Belongs to the elongation factor P family.</text>
</comment>
<accession>C4Z8W1</accession>
<evidence type="ECO:0000255" key="1">
    <source>
        <dbReference type="HAMAP-Rule" id="MF_00141"/>
    </source>
</evidence>
<keyword id="KW-0963">Cytoplasm</keyword>
<keyword id="KW-0251">Elongation factor</keyword>
<keyword id="KW-0648">Protein biosynthesis</keyword>
<reference key="1">
    <citation type="journal article" date="2009" name="Proc. Natl. Acad. Sci. U.S.A.">
        <title>Characterizing a model human gut microbiota composed of members of its two dominant bacterial phyla.</title>
        <authorList>
            <person name="Mahowald M.A."/>
            <person name="Rey F.E."/>
            <person name="Seedorf H."/>
            <person name="Turnbaugh P.J."/>
            <person name="Fulton R.S."/>
            <person name="Wollam A."/>
            <person name="Shah N."/>
            <person name="Wang C."/>
            <person name="Magrini V."/>
            <person name="Wilson R.K."/>
            <person name="Cantarel B.L."/>
            <person name="Coutinho P.M."/>
            <person name="Henrissat B."/>
            <person name="Crock L.W."/>
            <person name="Russell A."/>
            <person name="Verberkmoes N.C."/>
            <person name="Hettich R.L."/>
            <person name="Gordon J.I."/>
        </authorList>
    </citation>
    <scope>NUCLEOTIDE SEQUENCE [LARGE SCALE GENOMIC DNA]</scope>
    <source>
        <strain>ATCC 33656 / DSM 3377 / JCM 17463 / KCTC 5835 / LMG 30912 / VPI 0990</strain>
    </source>
</reference>
<gene>
    <name evidence="1" type="primary">efp</name>
    <name type="ordered locus">EUBREC_1433</name>
</gene>
<dbReference type="EMBL" id="CP001107">
    <property type="protein sequence ID" value="ACR75192.1"/>
    <property type="molecule type" value="Genomic_DNA"/>
</dbReference>
<dbReference type="RefSeq" id="WP_012742291.1">
    <property type="nucleotide sequence ID" value="NZ_CAXSYD010000007.1"/>
</dbReference>
<dbReference type="SMR" id="C4Z8W1"/>
<dbReference type="STRING" id="515619.EUBREC_1433"/>
<dbReference type="PaxDb" id="515619-EUBREC_1433"/>
<dbReference type="GeneID" id="86988255"/>
<dbReference type="KEGG" id="ere:EUBREC_1433"/>
<dbReference type="HOGENOM" id="CLU_074944_0_1_9"/>
<dbReference type="UniPathway" id="UPA00345"/>
<dbReference type="Proteomes" id="UP000001477">
    <property type="component" value="Chromosome"/>
</dbReference>
<dbReference type="GO" id="GO:0005737">
    <property type="term" value="C:cytoplasm"/>
    <property type="evidence" value="ECO:0007669"/>
    <property type="project" value="UniProtKB-SubCell"/>
</dbReference>
<dbReference type="GO" id="GO:0003746">
    <property type="term" value="F:translation elongation factor activity"/>
    <property type="evidence" value="ECO:0007669"/>
    <property type="project" value="UniProtKB-UniRule"/>
</dbReference>
<dbReference type="GO" id="GO:0043043">
    <property type="term" value="P:peptide biosynthetic process"/>
    <property type="evidence" value="ECO:0007669"/>
    <property type="project" value="InterPro"/>
</dbReference>
<dbReference type="CDD" id="cd04470">
    <property type="entry name" value="S1_EF-P_repeat_1"/>
    <property type="match status" value="1"/>
</dbReference>
<dbReference type="CDD" id="cd05794">
    <property type="entry name" value="S1_EF-P_repeat_2"/>
    <property type="match status" value="1"/>
</dbReference>
<dbReference type="FunFam" id="2.30.30.30:FF:000003">
    <property type="entry name" value="Elongation factor P"/>
    <property type="match status" value="1"/>
</dbReference>
<dbReference type="FunFam" id="2.40.50.140:FF:000004">
    <property type="entry name" value="Elongation factor P"/>
    <property type="match status" value="1"/>
</dbReference>
<dbReference type="FunFam" id="2.40.50.140:FF:000009">
    <property type="entry name" value="Elongation factor P"/>
    <property type="match status" value="1"/>
</dbReference>
<dbReference type="Gene3D" id="2.30.30.30">
    <property type="match status" value="1"/>
</dbReference>
<dbReference type="Gene3D" id="2.40.50.140">
    <property type="entry name" value="Nucleic acid-binding proteins"/>
    <property type="match status" value="2"/>
</dbReference>
<dbReference type="HAMAP" id="MF_00141">
    <property type="entry name" value="EF_P"/>
    <property type="match status" value="1"/>
</dbReference>
<dbReference type="InterPro" id="IPR015365">
    <property type="entry name" value="Elong-fact-P_C"/>
</dbReference>
<dbReference type="InterPro" id="IPR012340">
    <property type="entry name" value="NA-bd_OB-fold"/>
</dbReference>
<dbReference type="InterPro" id="IPR014722">
    <property type="entry name" value="Rib_uL2_dom2"/>
</dbReference>
<dbReference type="InterPro" id="IPR020599">
    <property type="entry name" value="Transl_elong_fac_P/YeiP"/>
</dbReference>
<dbReference type="InterPro" id="IPR013185">
    <property type="entry name" value="Transl_elong_KOW-like"/>
</dbReference>
<dbReference type="InterPro" id="IPR001059">
    <property type="entry name" value="Transl_elong_P/YeiP_cen"/>
</dbReference>
<dbReference type="InterPro" id="IPR013852">
    <property type="entry name" value="Transl_elong_P/YeiP_CS"/>
</dbReference>
<dbReference type="InterPro" id="IPR011768">
    <property type="entry name" value="Transl_elongation_fac_P"/>
</dbReference>
<dbReference type="InterPro" id="IPR008991">
    <property type="entry name" value="Translation_prot_SH3-like_sf"/>
</dbReference>
<dbReference type="NCBIfam" id="TIGR00038">
    <property type="entry name" value="efp"/>
    <property type="match status" value="1"/>
</dbReference>
<dbReference type="NCBIfam" id="NF001810">
    <property type="entry name" value="PRK00529.1"/>
    <property type="match status" value="1"/>
</dbReference>
<dbReference type="PANTHER" id="PTHR30053">
    <property type="entry name" value="ELONGATION FACTOR P"/>
    <property type="match status" value="1"/>
</dbReference>
<dbReference type="PANTHER" id="PTHR30053:SF12">
    <property type="entry name" value="ELONGATION FACTOR P (EF-P) FAMILY PROTEIN"/>
    <property type="match status" value="1"/>
</dbReference>
<dbReference type="Pfam" id="PF01132">
    <property type="entry name" value="EFP"/>
    <property type="match status" value="1"/>
</dbReference>
<dbReference type="Pfam" id="PF08207">
    <property type="entry name" value="EFP_N"/>
    <property type="match status" value="1"/>
</dbReference>
<dbReference type="Pfam" id="PF09285">
    <property type="entry name" value="Elong-fact-P_C"/>
    <property type="match status" value="1"/>
</dbReference>
<dbReference type="PIRSF" id="PIRSF005901">
    <property type="entry name" value="EF-P"/>
    <property type="match status" value="1"/>
</dbReference>
<dbReference type="SMART" id="SM01185">
    <property type="entry name" value="EFP"/>
    <property type="match status" value="1"/>
</dbReference>
<dbReference type="SMART" id="SM00841">
    <property type="entry name" value="Elong-fact-P_C"/>
    <property type="match status" value="1"/>
</dbReference>
<dbReference type="SUPFAM" id="SSF50249">
    <property type="entry name" value="Nucleic acid-binding proteins"/>
    <property type="match status" value="2"/>
</dbReference>
<dbReference type="SUPFAM" id="SSF50104">
    <property type="entry name" value="Translation proteins SH3-like domain"/>
    <property type="match status" value="1"/>
</dbReference>
<dbReference type="PROSITE" id="PS01275">
    <property type="entry name" value="EFP"/>
    <property type="match status" value="1"/>
</dbReference>